<evidence type="ECO:0000255" key="1">
    <source>
        <dbReference type="HAMAP-Rule" id="MF_00105"/>
    </source>
</evidence>
<organism>
    <name type="scientific">Staphylococcus aureus (strain JH1)</name>
    <dbReference type="NCBI Taxonomy" id="359787"/>
    <lineage>
        <taxon>Bacteria</taxon>
        <taxon>Bacillati</taxon>
        <taxon>Bacillota</taxon>
        <taxon>Bacilli</taxon>
        <taxon>Bacillales</taxon>
        <taxon>Staphylococcaceae</taxon>
        <taxon>Staphylococcus</taxon>
    </lineage>
</organism>
<dbReference type="EMBL" id="CP000736">
    <property type="protein sequence ID" value="ABR52547.1"/>
    <property type="molecule type" value="Genomic_DNA"/>
</dbReference>
<dbReference type="SMR" id="A6U279"/>
<dbReference type="KEGG" id="sah:SaurJH1_1701"/>
<dbReference type="HOGENOM" id="CLU_101379_2_1_9"/>
<dbReference type="GO" id="GO:0003677">
    <property type="term" value="F:DNA binding"/>
    <property type="evidence" value="ECO:0007669"/>
    <property type="project" value="UniProtKB-UniRule"/>
</dbReference>
<dbReference type="GO" id="GO:0070063">
    <property type="term" value="F:RNA polymerase binding"/>
    <property type="evidence" value="ECO:0007669"/>
    <property type="project" value="InterPro"/>
</dbReference>
<dbReference type="GO" id="GO:0006354">
    <property type="term" value="P:DNA-templated transcription elongation"/>
    <property type="evidence" value="ECO:0007669"/>
    <property type="project" value="TreeGrafter"/>
</dbReference>
<dbReference type="GO" id="GO:0032784">
    <property type="term" value="P:regulation of DNA-templated transcription elongation"/>
    <property type="evidence" value="ECO:0007669"/>
    <property type="project" value="UniProtKB-UniRule"/>
</dbReference>
<dbReference type="FunFam" id="1.10.287.180:FF:000001">
    <property type="entry name" value="Transcription elongation factor GreA"/>
    <property type="match status" value="1"/>
</dbReference>
<dbReference type="FunFam" id="3.10.50.30:FF:000001">
    <property type="entry name" value="Transcription elongation factor GreA"/>
    <property type="match status" value="1"/>
</dbReference>
<dbReference type="Gene3D" id="3.10.50.30">
    <property type="entry name" value="Transcription elongation factor, GreA/GreB, C-terminal domain"/>
    <property type="match status" value="1"/>
</dbReference>
<dbReference type="Gene3D" id="1.10.287.180">
    <property type="entry name" value="Transcription elongation factor, GreA/GreB, N-terminal domain"/>
    <property type="match status" value="1"/>
</dbReference>
<dbReference type="HAMAP" id="MF_00105">
    <property type="entry name" value="GreA_GreB"/>
    <property type="match status" value="1"/>
</dbReference>
<dbReference type="InterPro" id="IPR036953">
    <property type="entry name" value="GreA/GreB_C_sf"/>
</dbReference>
<dbReference type="InterPro" id="IPR018151">
    <property type="entry name" value="TF_GreA/GreB_CS"/>
</dbReference>
<dbReference type="InterPro" id="IPR006359">
    <property type="entry name" value="Tscrpt_elong_fac_GreA"/>
</dbReference>
<dbReference type="InterPro" id="IPR028624">
    <property type="entry name" value="Tscrpt_elong_fac_GreA/B"/>
</dbReference>
<dbReference type="InterPro" id="IPR001437">
    <property type="entry name" value="Tscrpt_elong_fac_GreA/B_C"/>
</dbReference>
<dbReference type="InterPro" id="IPR023459">
    <property type="entry name" value="Tscrpt_elong_fac_GreA/B_fam"/>
</dbReference>
<dbReference type="InterPro" id="IPR022691">
    <property type="entry name" value="Tscrpt_elong_fac_GreA/B_N"/>
</dbReference>
<dbReference type="InterPro" id="IPR036805">
    <property type="entry name" value="Tscrpt_elong_fac_GreA/B_N_sf"/>
</dbReference>
<dbReference type="NCBIfam" id="TIGR01462">
    <property type="entry name" value="greA"/>
    <property type="match status" value="1"/>
</dbReference>
<dbReference type="NCBIfam" id="NF001261">
    <property type="entry name" value="PRK00226.1-2"/>
    <property type="match status" value="1"/>
</dbReference>
<dbReference type="NCBIfam" id="NF001263">
    <property type="entry name" value="PRK00226.1-4"/>
    <property type="match status" value="1"/>
</dbReference>
<dbReference type="PANTHER" id="PTHR30437">
    <property type="entry name" value="TRANSCRIPTION ELONGATION FACTOR GREA"/>
    <property type="match status" value="1"/>
</dbReference>
<dbReference type="PANTHER" id="PTHR30437:SF4">
    <property type="entry name" value="TRANSCRIPTION ELONGATION FACTOR GREA"/>
    <property type="match status" value="1"/>
</dbReference>
<dbReference type="Pfam" id="PF01272">
    <property type="entry name" value="GreA_GreB"/>
    <property type="match status" value="1"/>
</dbReference>
<dbReference type="Pfam" id="PF03449">
    <property type="entry name" value="GreA_GreB_N"/>
    <property type="match status" value="1"/>
</dbReference>
<dbReference type="PIRSF" id="PIRSF006092">
    <property type="entry name" value="GreA_GreB"/>
    <property type="match status" value="1"/>
</dbReference>
<dbReference type="SUPFAM" id="SSF54534">
    <property type="entry name" value="FKBP-like"/>
    <property type="match status" value="1"/>
</dbReference>
<dbReference type="SUPFAM" id="SSF46557">
    <property type="entry name" value="GreA transcript cleavage protein, N-terminal domain"/>
    <property type="match status" value="1"/>
</dbReference>
<dbReference type="PROSITE" id="PS00829">
    <property type="entry name" value="GREAB_1"/>
    <property type="match status" value="1"/>
</dbReference>
<dbReference type="PROSITE" id="PS00830">
    <property type="entry name" value="GREAB_2"/>
    <property type="match status" value="1"/>
</dbReference>
<comment type="function">
    <text evidence="1">Necessary for efficient RNA polymerase transcription elongation past template-encoded arresting sites. The arresting sites in DNA have the property of trapping a certain fraction of elongating RNA polymerases that pass through, resulting in locked ternary complexes. Cleavage of the nascent transcript by cleavage factors such as GreA or GreB allows the resumption of elongation from the new 3'terminus. GreA releases sequences of 2 to 3 nucleotides.</text>
</comment>
<comment type="similarity">
    <text evidence="1">Belongs to the GreA/GreB family.</text>
</comment>
<gene>
    <name evidence="1" type="primary">greA</name>
    <name type="ordered locus">SaurJH1_1701</name>
</gene>
<sequence length="158" mass="17743">MENQKQYPMTQEGFEKLERELEELKTVKRPEVVEKIKVARSFGDLSENSEYDAAKDEQGFIEQDIQRIEHMLRNALIIEDTGDNNVVKIGKTVTFVELPGDEEESYQIVGSAESDAFNGKISNESPMAKALIGKGLDDEVRVPLPNGGEMNVKIVNIQ</sequence>
<feature type="chain" id="PRO_1000075890" description="Transcription elongation factor GreA">
    <location>
        <begin position="1"/>
        <end position="158"/>
    </location>
</feature>
<feature type="coiled-coil region" evidence="1">
    <location>
        <begin position="4"/>
        <end position="70"/>
    </location>
</feature>
<reference key="1">
    <citation type="submission" date="2007-06" db="EMBL/GenBank/DDBJ databases">
        <title>Complete sequence of chromosome of Staphylococcus aureus subsp. aureus JH1.</title>
        <authorList>
            <consortium name="US DOE Joint Genome Institute"/>
            <person name="Copeland A."/>
            <person name="Lucas S."/>
            <person name="Lapidus A."/>
            <person name="Barry K."/>
            <person name="Detter J.C."/>
            <person name="Glavina del Rio T."/>
            <person name="Hammon N."/>
            <person name="Israni S."/>
            <person name="Dalin E."/>
            <person name="Tice H."/>
            <person name="Pitluck S."/>
            <person name="Chain P."/>
            <person name="Malfatti S."/>
            <person name="Shin M."/>
            <person name="Vergez L."/>
            <person name="Schmutz J."/>
            <person name="Larimer F."/>
            <person name="Land M."/>
            <person name="Hauser L."/>
            <person name="Kyrpides N."/>
            <person name="Ivanova N."/>
            <person name="Tomasz A."/>
            <person name="Richardson P."/>
        </authorList>
    </citation>
    <scope>NUCLEOTIDE SEQUENCE [LARGE SCALE GENOMIC DNA]</scope>
    <source>
        <strain>JH1</strain>
    </source>
</reference>
<protein>
    <recommendedName>
        <fullName evidence="1">Transcription elongation factor GreA</fullName>
    </recommendedName>
    <alternativeName>
        <fullName evidence="1">Transcript cleavage factor GreA</fullName>
    </alternativeName>
</protein>
<keyword id="KW-0175">Coiled coil</keyword>
<keyword id="KW-0238">DNA-binding</keyword>
<keyword id="KW-0804">Transcription</keyword>
<keyword id="KW-0805">Transcription regulation</keyword>
<name>GREA_STAA2</name>
<proteinExistence type="inferred from homology"/>
<accession>A6U279</accession>